<name>ILVD_ECOSM</name>
<comment type="function">
    <text evidence="1">Functions in the biosynthesis of branched-chain amino acids. Catalyzes the dehydration of (2R,3R)-2,3-dihydroxy-3-methylpentanoate (2,3-dihydroxy-3-methylvalerate) into 2-oxo-3-methylpentanoate (2-oxo-3-methylvalerate) and of (2R)-2,3-dihydroxy-3-methylbutanoate (2,3-dihydroxyisovalerate) into 2-oxo-3-methylbutanoate (2-oxoisovalerate), the penultimate precursor to L-isoleucine and L-valine, respectively.</text>
</comment>
<comment type="catalytic activity">
    <reaction evidence="1">
        <text>(2R)-2,3-dihydroxy-3-methylbutanoate = 3-methyl-2-oxobutanoate + H2O</text>
        <dbReference type="Rhea" id="RHEA:24809"/>
        <dbReference type="ChEBI" id="CHEBI:11851"/>
        <dbReference type="ChEBI" id="CHEBI:15377"/>
        <dbReference type="ChEBI" id="CHEBI:49072"/>
        <dbReference type="EC" id="4.2.1.9"/>
    </reaction>
    <physiologicalReaction direction="left-to-right" evidence="1">
        <dbReference type="Rhea" id="RHEA:24810"/>
    </physiologicalReaction>
</comment>
<comment type="catalytic activity">
    <reaction evidence="1">
        <text>(2R,3R)-2,3-dihydroxy-3-methylpentanoate = (S)-3-methyl-2-oxopentanoate + H2O</text>
        <dbReference type="Rhea" id="RHEA:27694"/>
        <dbReference type="ChEBI" id="CHEBI:15377"/>
        <dbReference type="ChEBI" id="CHEBI:35146"/>
        <dbReference type="ChEBI" id="CHEBI:49258"/>
        <dbReference type="EC" id="4.2.1.9"/>
    </reaction>
    <physiologicalReaction direction="left-to-right" evidence="1">
        <dbReference type="Rhea" id="RHEA:27695"/>
    </physiologicalReaction>
</comment>
<comment type="cofactor">
    <cofactor evidence="1">
        <name>[2Fe-2S] cluster</name>
        <dbReference type="ChEBI" id="CHEBI:190135"/>
    </cofactor>
    <text evidence="1">Binds 1 [2Fe-2S] cluster per subunit. This cluster acts as a Lewis acid cofactor.</text>
</comment>
<comment type="cofactor">
    <cofactor evidence="1">
        <name>Mg(2+)</name>
        <dbReference type="ChEBI" id="CHEBI:18420"/>
    </cofactor>
</comment>
<comment type="pathway">
    <text evidence="1">Amino-acid biosynthesis; L-isoleucine biosynthesis; L-isoleucine from 2-oxobutanoate: step 3/4.</text>
</comment>
<comment type="pathway">
    <text evidence="1">Amino-acid biosynthesis; L-valine biosynthesis; L-valine from pyruvate: step 3/4.</text>
</comment>
<comment type="subunit">
    <text evidence="1">Homodimer.</text>
</comment>
<comment type="similarity">
    <text evidence="1">Belongs to the IlvD/Edd family.</text>
</comment>
<proteinExistence type="inferred from homology"/>
<organism>
    <name type="scientific">Escherichia coli (strain SMS-3-5 / SECEC)</name>
    <dbReference type="NCBI Taxonomy" id="439855"/>
    <lineage>
        <taxon>Bacteria</taxon>
        <taxon>Pseudomonadati</taxon>
        <taxon>Pseudomonadota</taxon>
        <taxon>Gammaproteobacteria</taxon>
        <taxon>Enterobacterales</taxon>
        <taxon>Enterobacteriaceae</taxon>
        <taxon>Escherichia</taxon>
    </lineage>
</organism>
<reference key="1">
    <citation type="journal article" date="2008" name="J. Bacteriol.">
        <title>Insights into the environmental resistance gene pool from the genome sequence of the multidrug-resistant environmental isolate Escherichia coli SMS-3-5.</title>
        <authorList>
            <person name="Fricke W.F."/>
            <person name="Wright M.S."/>
            <person name="Lindell A.H."/>
            <person name="Harkins D.M."/>
            <person name="Baker-Austin C."/>
            <person name="Ravel J."/>
            <person name="Stepanauskas R."/>
        </authorList>
    </citation>
    <scope>NUCLEOTIDE SEQUENCE [LARGE SCALE GENOMIC DNA]</scope>
    <source>
        <strain>SMS-3-5 / SECEC</strain>
    </source>
</reference>
<keyword id="KW-0001">2Fe-2S</keyword>
<keyword id="KW-0028">Amino-acid biosynthesis</keyword>
<keyword id="KW-0100">Branched-chain amino acid biosynthesis</keyword>
<keyword id="KW-0408">Iron</keyword>
<keyword id="KW-0411">Iron-sulfur</keyword>
<keyword id="KW-0456">Lyase</keyword>
<keyword id="KW-0460">Magnesium</keyword>
<keyword id="KW-0479">Metal-binding</keyword>
<evidence type="ECO:0000255" key="1">
    <source>
        <dbReference type="HAMAP-Rule" id="MF_00012"/>
    </source>
</evidence>
<gene>
    <name evidence="1" type="primary">ilvD</name>
    <name type="ordered locus">EcSMS35_4137</name>
</gene>
<feature type="chain" id="PRO_1000116273" description="Dihydroxy-acid dehydratase">
    <location>
        <begin position="1"/>
        <end position="616"/>
    </location>
</feature>
<feature type="active site" description="Proton acceptor" evidence="1">
    <location>
        <position position="517"/>
    </location>
</feature>
<feature type="binding site" evidence="1">
    <location>
        <position position="81"/>
    </location>
    <ligand>
        <name>Mg(2+)</name>
        <dbReference type="ChEBI" id="CHEBI:18420"/>
    </ligand>
</feature>
<feature type="binding site" evidence="1">
    <location>
        <position position="122"/>
    </location>
    <ligand>
        <name>[2Fe-2S] cluster</name>
        <dbReference type="ChEBI" id="CHEBI:190135"/>
    </ligand>
</feature>
<feature type="binding site" evidence="1">
    <location>
        <position position="123"/>
    </location>
    <ligand>
        <name>Mg(2+)</name>
        <dbReference type="ChEBI" id="CHEBI:18420"/>
    </ligand>
</feature>
<feature type="binding site" description="via carbamate group" evidence="1">
    <location>
        <position position="124"/>
    </location>
    <ligand>
        <name>Mg(2+)</name>
        <dbReference type="ChEBI" id="CHEBI:18420"/>
    </ligand>
</feature>
<feature type="binding site" evidence="1">
    <location>
        <position position="195"/>
    </location>
    <ligand>
        <name>[2Fe-2S] cluster</name>
        <dbReference type="ChEBI" id="CHEBI:190135"/>
    </ligand>
</feature>
<feature type="binding site" evidence="1">
    <location>
        <position position="491"/>
    </location>
    <ligand>
        <name>Mg(2+)</name>
        <dbReference type="ChEBI" id="CHEBI:18420"/>
    </ligand>
</feature>
<feature type="modified residue" description="N6-carboxylysine" evidence="1">
    <location>
        <position position="124"/>
    </location>
</feature>
<protein>
    <recommendedName>
        <fullName evidence="1">Dihydroxy-acid dehydratase</fullName>
        <shortName evidence="1">DAD</shortName>
        <ecNumber evidence="1">4.2.1.9</ecNumber>
    </recommendedName>
</protein>
<accession>B1LLU6</accession>
<dbReference type="EC" id="4.2.1.9" evidence="1"/>
<dbReference type="EMBL" id="CP000970">
    <property type="protein sequence ID" value="ACB18610.1"/>
    <property type="molecule type" value="Genomic_DNA"/>
</dbReference>
<dbReference type="RefSeq" id="WP_001127406.1">
    <property type="nucleotide sequence ID" value="NC_010498.1"/>
</dbReference>
<dbReference type="SMR" id="B1LLU6"/>
<dbReference type="KEGG" id="ecm:EcSMS35_4137"/>
<dbReference type="HOGENOM" id="CLU_014271_4_2_6"/>
<dbReference type="UniPathway" id="UPA00047">
    <property type="reaction ID" value="UER00057"/>
</dbReference>
<dbReference type="UniPathway" id="UPA00049">
    <property type="reaction ID" value="UER00061"/>
</dbReference>
<dbReference type="Proteomes" id="UP000007011">
    <property type="component" value="Chromosome"/>
</dbReference>
<dbReference type="GO" id="GO:0005829">
    <property type="term" value="C:cytosol"/>
    <property type="evidence" value="ECO:0007669"/>
    <property type="project" value="TreeGrafter"/>
</dbReference>
<dbReference type="GO" id="GO:0051537">
    <property type="term" value="F:2 iron, 2 sulfur cluster binding"/>
    <property type="evidence" value="ECO:0007669"/>
    <property type="project" value="UniProtKB-UniRule"/>
</dbReference>
<dbReference type="GO" id="GO:0004160">
    <property type="term" value="F:dihydroxy-acid dehydratase activity"/>
    <property type="evidence" value="ECO:0007669"/>
    <property type="project" value="UniProtKB-UniRule"/>
</dbReference>
<dbReference type="GO" id="GO:0000287">
    <property type="term" value="F:magnesium ion binding"/>
    <property type="evidence" value="ECO:0007669"/>
    <property type="project" value="UniProtKB-UniRule"/>
</dbReference>
<dbReference type="GO" id="GO:0009097">
    <property type="term" value="P:isoleucine biosynthetic process"/>
    <property type="evidence" value="ECO:0007669"/>
    <property type="project" value="UniProtKB-UniRule"/>
</dbReference>
<dbReference type="GO" id="GO:0009099">
    <property type="term" value="P:L-valine biosynthetic process"/>
    <property type="evidence" value="ECO:0007669"/>
    <property type="project" value="UniProtKB-UniRule"/>
</dbReference>
<dbReference type="FunFam" id="3.50.30.80:FF:000001">
    <property type="entry name" value="Dihydroxy-acid dehydratase"/>
    <property type="match status" value="1"/>
</dbReference>
<dbReference type="Gene3D" id="3.50.30.80">
    <property type="entry name" value="IlvD/EDD C-terminal domain-like"/>
    <property type="match status" value="1"/>
</dbReference>
<dbReference type="HAMAP" id="MF_00012">
    <property type="entry name" value="IlvD"/>
    <property type="match status" value="1"/>
</dbReference>
<dbReference type="InterPro" id="IPR042096">
    <property type="entry name" value="Dihydro-acid_dehy_C"/>
</dbReference>
<dbReference type="InterPro" id="IPR004404">
    <property type="entry name" value="DihydroxyA_deHydtase"/>
</dbReference>
<dbReference type="InterPro" id="IPR020558">
    <property type="entry name" value="DiOHA_6PGluconate_deHydtase_CS"/>
</dbReference>
<dbReference type="InterPro" id="IPR056740">
    <property type="entry name" value="ILV_EDD_C"/>
</dbReference>
<dbReference type="InterPro" id="IPR000581">
    <property type="entry name" value="ILV_EDD_N"/>
</dbReference>
<dbReference type="InterPro" id="IPR037237">
    <property type="entry name" value="IlvD/EDD_N"/>
</dbReference>
<dbReference type="NCBIfam" id="TIGR00110">
    <property type="entry name" value="ilvD"/>
    <property type="match status" value="1"/>
</dbReference>
<dbReference type="NCBIfam" id="NF009103">
    <property type="entry name" value="PRK12448.1"/>
    <property type="match status" value="1"/>
</dbReference>
<dbReference type="PANTHER" id="PTHR43661">
    <property type="entry name" value="D-XYLONATE DEHYDRATASE"/>
    <property type="match status" value="1"/>
</dbReference>
<dbReference type="PANTHER" id="PTHR43661:SF3">
    <property type="entry name" value="D-XYLONATE DEHYDRATASE YAGF-RELATED"/>
    <property type="match status" value="1"/>
</dbReference>
<dbReference type="Pfam" id="PF24877">
    <property type="entry name" value="ILV_EDD_C"/>
    <property type="match status" value="1"/>
</dbReference>
<dbReference type="Pfam" id="PF00920">
    <property type="entry name" value="ILVD_EDD_N"/>
    <property type="match status" value="1"/>
</dbReference>
<dbReference type="SUPFAM" id="SSF143975">
    <property type="entry name" value="IlvD/EDD N-terminal domain-like"/>
    <property type="match status" value="1"/>
</dbReference>
<dbReference type="SUPFAM" id="SSF52016">
    <property type="entry name" value="LeuD/IlvD-like"/>
    <property type="match status" value="1"/>
</dbReference>
<dbReference type="PROSITE" id="PS00886">
    <property type="entry name" value="ILVD_EDD_1"/>
    <property type="match status" value="1"/>
</dbReference>
<dbReference type="PROSITE" id="PS00887">
    <property type="entry name" value="ILVD_EDD_2"/>
    <property type="match status" value="1"/>
</dbReference>
<sequence length="616" mass="65562">MPKYRSATTTHGRNMAGARALWRATGMTDADFGKPIIAVVNSFTQFVPGHVHLRDLGKLVAEQIEAAGGVAKEFNTIAVDDGIAMGHGGMLYSLPSRELIADSVEYMVNAHCADAMVCISNCDKITPGMLMASLRLNIPVIFVSGGPMEAGKTKLSDQIIKLDLVDAMIQGADPKVSDSQSDQVERSACPTCGSCSGMFTANSMNCLTEALGLSQPGNGSLLATHADRKQLFLNAGKRIVELTKRYYEQNDESALPRNIASKAAFENAMTLDIAMGGSTNTVLHLLAAAQEAEIDFTMSDIDKLSRKVPQLCKVAPSTQKYHMEDVHRAGGVIGILGELDRAGLLNRDVKNVLGLTLPQTLEQYDVMLTQDDSVKNMFRAGPAGIRTTQAFSQDCRWDSLDDDRANGCIRSLEHAYSKEGGLAVLYGNFAENGCIVKTAGVDDSILKFTGPAKVYESQDDAVEAILGGKVVAGDVVVIRYEGPKGGPGMQEMLYPTSFLKSMGLGKACALITDGRFSGGTSGLSIGHVSPEAASGGSIGLIEDGDLIAIDIPNRGIQLQVSDAELAARREAQEARGDKAWTPKNRERQVSFALRAYASLATSADKGAVRDKSKLGG</sequence>